<feature type="chain" id="PRO_0000404601" description="Vertnin">
    <location>
        <begin position="1"/>
        <end position="698"/>
    </location>
</feature>
<accession>E1CHH8</accession>
<proteinExistence type="evidence at transcript level"/>
<reference key="1">
    <citation type="submission" date="2010-03" db="EMBL/GenBank/DDBJ databases">
        <title>QTL mapping on swine chromosome 7.</title>
        <authorList>
            <person name="Mikawa S."/>
            <person name="Sato S."/>
            <person name="Morozumi T."/>
            <person name="Hayashi T."/>
            <person name="Awata T."/>
        </authorList>
    </citation>
    <scope>NUCLEOTIDE SEQUENCE [GENOMIC DNA / MRNA]</scope>
    <source>
        <strain>Large white X Landrace X Duroc</strain>
        <tissue>Embryo</tissue>
    </source>
</reference>
<reference key="2">
    <citation type="journal article" date="2011" name="BMC Genet.">
        <title>Identification of a second gene associated with variation in vertebral number in domestic pigs.</title>
        <authorList>
            <person name="Mikawa S."/>
            <person name="Sato S."/>
            <person name="Nii M."/>
            <person name="Morozumi T."/>
            <person name="Yoshioka G."/>
            <person name="Imaeda N."/>
            <person name="Yamaguchi T."/>
            <person name="Hayashi T."/>
            <person name="Awata T."/>
        </authorList>
    </citation>
    <scope>POLYMORPHISM</scope>
</reference>
<reference key="3">
    <citation type="journal article" date="2018" name="Int. J. Biol. Sci.">
        <title>VRTN is Required for the Development of Thoracic Vertebrae in Mammals.</title>
        <authorList>
            <person name="Duan Y."/>
            <person name="Zhang H."/>
            <person name="Zhang Z."/>
            <person name="Gao J."/>
            <person name="Yang J."/>
            <person name="Wu Z."/>
            <person name="Fan Y."/>
            <person name="Xing Y."/>
            <person name="Li L."/>
            <person name="Xiao S."/>
            <person name="Hou Y."/>
            <person name="Ren J."/>
            <person name="Huang L."/>
        </authorList>
    </citation>
    <scope>SUBCELLULAR LOCATION</scope>
    <scope>POLYMORPHISM</scope>
</reference>
<organism>
    <name type="scientific">Sus scrofa</name>
    <name type="common">Pig</name>
    <dbReference type="NCBI Taxonomy" id="9823"/>
    <lineage>
        <taxon>Eukaryota</taxon>
        <taxon>Metazoa</taxon>
        <taxon>Chordata</taxon>
        <taxon>Craniata</taxon>
        <taxon>Vertebrata</taxon>
        <taxon>Euteleostomi</taxon>
        <taxon>Mammalia</taxon>
        <taxon>Eutheria</taxon>
        <taxon>Laurasiatheria</taxon>
        <taxon>Artiodactyla</taxon>
        <taxon>Suina</taxon>
        <taxon>Suidae</taxon>
        <taxon>Sus</taxon>
    </lineage>
</organism>
<sequence>MTSREQLVLQVLQELQEAVESEGLEGLVGAALEAKQVLSSFALPTCREGGPGPQVLEVDSVALSLYPEDAPRNMLPLVCKGEGSLLFEAASMLLWGDSGLSLELRARTVVEMLLHRHYYLQGMIDSKVMLQAVRYSLCSEESPEMTSLPSATLEAIFDADVKATCFPSSFSNVWHLYALASVLQRNIYSIYPMRNLKIRPYFNRVIRPRRCDHMPATLHIMWAGQPLTNHLFRHQYFAPVVGLEEVEAESATTSLAPTPPALAPLPPPAKTLELLSQDPGLSYSYLCERYSVTKSTFYRWRRQSQEHRQKVATRFSAKHFLQDSFHRGGVVPLQQFLQRFPEISRSTYYAWKHELLGSGTCQALGPMEELEKLTEEQVAEGLGCSSPAVSSPGMVLMQRAKLYLEHCISLNTLVPYRCFKRRFPGISRSTYYNWRRKALRRNPSFKPAPVLSVAGATQPASVGEKALLPWEGEVGEEAGKATGGGQPAPREFLPLRMPLSRWQRRLRREARKQVLSGHLPFCRFRLRYPSLSPSTFWVWKSLARGWPRSLSKLHIQAPTLGKGGIQEVEEKQEKEAGRNVTAAMAPPAGTLQMTASPGEDPGAALGGPSREGALQEGAMAQGRPMVAAAGGRDGQVLVMDMLATTKFKAQAKLFLQKRFQSKSFPSYKEFSALFPLTARSTYYMWKRALYDGLTLVDG</sequence>
<gene>
    <name type="primary">VRTN</name>
</gene>
<keyword id="KW-0217">Developmental protein</keyword>
<keyword id="KW-0238">DNA-binding</keyword>
<keyword id="KW-0539">Nucleus</keyword>
<keyword id="KW-1185">Reference proteome</keyword>
<keyword id="KW-0804">Transcription</keyword>
<keyword id="KW-0805">Transcription regulation</keyword>
<evidence type="ECO:0000250" key="1">
    <source>
        <dbReference type="UniProtKB" id="Q3SYK4"/>
    </source>
</evidence>
<evidence type="ECO:0000269" key="2">
    <source>
    </source>
</evidence>
<evidence type="ECO:0000303" key="3">
    <source>
    </source>
</evidence>
<evidence type="ECO:0000305" key="4"/>
<evidence type="ECO:0000305" key="5">
    <source>
    </source>
</evidence>
<name>VRTN_PIG</name>
<protein>
    <recommendedName>
        <fullName evidence="3">Vertnin</fullName>
    </recommendedName>
</protein>
<dbReference type="EMBL" id="AB550854">
    <property type="protein sequence ID" value="BAJ11937.1"/>
    <property type="molecule type" value="mRNA"/>
</dbReference>
<dbReference type="EMBL" id="AB554652">
    <property type="protein sequence ID" value="BAJ11938.1"/>
    <property type="molecule type" value="Genomic_DNA"/>
</dbReference>
<dbReference type="RefSeq" id="NP_001182042.1">
    <property type="nucleotide sequence ID" value="NM_001195113.1"/>
</dbReference>
<dbReference type="FunCoup" id="E1CHH8">
    <property type="interactions" value="87"/>
</dbReference>
<dbReference type="STRING" id="9823.ENSSSCP00000028089"/>
<dbReference type="GlyGen" id="E1CHH8">
    <property type="glycosylation" value="1 site"/>
</dbReference>
<dbReference type="PaxDb" id="9823-ENSSSCP00000028089"/>
<dbReference type="Ensembl" id="ENSSSCT00015107229.1">
    <property type="protein sequence ID" value="ENSSSCP00015045267.1"/>
    <property type="gene ID" value="ENSSSCG00015079097.1"/>
</dbReference>
<dbReference type="Ensembl" id="ENSSSCT00025015861.1">
    <property type="protein sequence ID" value="ENSSSCP00025006284.1"/>
    <property type="gene ID" value="ENSSSCG00025012010.1"/>
</dbReference>
<dbReference type="Ensembl" id="ENSSSCT00045032706.1">
    <property type="protein sequence ID" value="ENSSSCP00045022649.1"/>
    <property type="gene ID" value="ENSSSCG00045019238.1"/>
</dbReference>
<dbReference type="Ensembl" id="ENSSSCT00050094866.1">
    <property type="protein sequence ID" value="ENSSSCP00050040886.1"/>
    <property type="gene ID" value="ENSSSCG00050069542.1"/>
</dbReference>
<dbReference type="Ensembl" id="ENSSSCT00085035751">
    <property type="protein sequence ID" value="ENSSSCP00085024540"/>
    <property type="gene ID" value="ENSSSCG00085018860"/>
</dbReference>
<dbReference type="Ensembl" id="ENSSSCT00090038214">
    <property type="protein sequence ID" value="ENSSSCP00090023818"/>
    <property type="gene ID" value="ENSSSCG00090021549"/>
</dbReference>
<dbReference type="Ensembl" id="ENSSSCT00105068822">
    <property type="protein sequence ID" value="ENSSSCP00105048802"/>
    <property type="gene ID" value="ENSSSCG00105036126"/>
</dbReference>
<dbReference type="Ensembl" id="ENSSSCT00110059759">
    <property type="protein sequence ID" value="ENSSSCP00110041717"/>
    <property type="gene ID" value="ENSSSCG00110031299"/>
</dbReference>
<dbReference type="Ensembl" id="ENSSSCT00115022749">
    <property type="protein sequence ID" value="ENSSSCP00115021564"/>
    <property type="gene ID" value="ENSSSCG00115013177"/>
</dbReference>
<dbReference type="GeneID" id="100157734"/>
<dbReference type="KEGG" id="ssc:100157734"/>
<dbReference type="CTD" id="55237"/>
<dbReference type="eggNOG" id="ENOG502SC23">
    <property type="taxonomic scope" value="Eukaryota"/>
</dbReference>
<dbReference type="InParanoid" id="E1CHH8"/>
<dbReference type="OrthoDB" id="9869831at2759"/>
<dbReference type="Proteomes" id="UP000008227">
    <property type="component" value="Unplaced"/>
</dbReference>
<dbReference type="Proteomes" id="UP000314985">
    <property type="component" value="Unplaced"/>
</dbReference>
<dbReference type="Proteomes" id="UP000694570">
    <property type="component" value="Unplaced"/>
</dbReference>
<dbReference type="Proteomes" id="UP000694571">
    <property type="component" value="Unplaced"/>
</dbReference>
<dbReference type="Proteomes" id="UP000694720">
    <property type="component" value="Unplaced"/>
</dbReference>
<dbReference type="Proteomes" id="UP000694722">
    <property type="component" value="Unplaced"/>
</dbReference>
<dbReference type="Proteomes" id="UP000694723">
    <property type="component" value="Unplaced"/>
</dbReference>
<dbReference type="Proteomes" id="UP000694724">
    <property type="component" value="Unplaced"/>
</dbReference>
<dbReference type="Proteomes" id="UP000694725">
    <property type="component" value="Unplaced"/>
</dbReference>
<dbReference type="Proteomes" id="UP000694726">
    <property type="component" value="Unplaced"/>
</dbReference>
<dbReference type="Proteomes" id="UP000694727">
    <property type="component" value="Unplaced"/>
</dbReference>
<dbReference type="Proteomes" id="UP000694728">
    <property type="component" value="Unplaced"/>
</dbReference>
<dbReference type="GO" id="GO:0000785">
    <property type="term" value="C:chromatin"/>
    <property type="evidence" value="ECO:0000318"/>
    <property type="project" value="GO_Central"/>
</dbReference>
<dbReference type="GO" id="GO:0005634">
    <property type="term" value="C:nucleus"/>
    <property type="evidence" value="ECO:0000314"/>
    <property type="project" value="UniProtKB"/>
</dbReference>
<dbReference type="GO" id="GO:0043565">
    <property type="term" value="F:sequence-specific DNA binding"/>
    <property type="evidence" value="ECO:0007669"/>
    <property type="project" value="InterPro"/>
</dbReference>
<dbReference type="GO" id="GO:0006357">
    <property type="term" value="P:regulation of transcription by RNA polymerase II"/>
    <property type="evidence" value="ECO:0000315"/>
    <property type="project" value="UniProtKB"/>
</dbReference>
<dbReference type="CDD" id="cd22791">
    <property type="entry name" value="OTU_VRTN"/>
    <property type="match status" value="1"/>
</dbReference>
<dbReference type="InterPro" id="IPR010921">
    <property type="entry name" value="Trp_repressor/repl_initiator"/>
</dbReference>
<dbReference type="InterPro" id="IPR038822">
    <property type="entry name" value="Vertnin-like"/>
</dbReference>
<dbReference type="InterPro" id="IPR047273">
    <property type="entry name" value="VRTN_OTU_dom"/>
</dbReference>
<dbReference type="PANTHER" id="PTHR16081">
    <property type="entry name" value="VERTNIN"/>
    <property type="match status" value="1"/>
</dbReference>
<dbReference type="PANTHER" id="PTHR16081:SF0">
    <property type="entry name" value="VERTNIN"/>
    <property type="match status" value="1"/>
</dbReference>
<dbReference type="SUPFAM" id="SSF48295">
    <property type="entry name" value="TrpR-like"/>
    <property type="match status" value="1"/>
</dbReference>
<comment type="function">
    <text evidence="1">Acts as a transcription factor that regulates development of thoracic vertebrae.</text>
</comment>
<comment type="subcellular location">
    <subcellularLocation>
        <location evidence="2">Nucleus</location>
    </subcellularLocation>
</comment>
<comment type="polymorphism">
    <text evidence="2 5">Genetic diversity of VRTN may be the cause of the heterogeneity of the number of vertebrae in commercial-breed pig. Wild boars uniformly have 19 vertebrae, while European commercial breeds have 21 to 23 vertebrae.</text>
</comment>
<comment type="similarity">
    <text evidence="4">Belongs to the vertnin family.</text>
</comment>